<name>UBE2S_BOVIN</name>
<proteinExistence type="evidence at transcript level"/>
<comment type="function">
    <text evidence="1">Accepts ubiquitin from the E1 complex and catalyzes its covalent attachment to other proteins. Catalyzes 'Lys-11'-linked polyubiquitination. Acts as an essential factor of the anaphase promoting complex/cyclosome (APC/C), a cell cycle-regulated ubiquitin ligase that controls progression through mitosis. Acts by specifically elongating 'Lys-11'-linked polyubiquitin chains initiated by the E2 enzyme UBE2C/UBCH10 on APC/C substrates, enhancing the degradation of APC/C substrates by the proteasome and promoting mitotic exit. Also acts by elongating ubiquitin chains initiated by the E2 enzyme UBE2D1/UBCH5 in vitro; it is however unclear whether UBE2D1/UBCH5 acts as an E2 enzyme for the APC/C in vivo. Also involved in ubiquitination and subsequent degradation of VHL, resulting in an accumulation of HIF1A. In vitro able to promote polyubiquitination using all 7 ubiquitin Lys residues, except 'Lys-48'-linked polyubiquitination.</text>
</comment>
<comment type="catalytic activity">
    <reaction evidence="2 3">
        <text>S-ubiquitinyl-[E1 ubiquitin-activating enzyme]-L-cysteine + [E2 ubiquitin-conjugating enzyme]-L-cysteine = [E1 ubiquitin-activating enzyme]-L-cysteine + S-ubiquitinyl-[E2 ubiquitin-conjugating enzyme]-L-cysteine.</text>
        <dbReference type="EC" id="2.3.2.23"/>
    </reaction>
</comment>
<comment type="pathway">
    <text evidence="2">Protein modification; protein ubiquitination.</text>
</comment>
<comment type="subunit">
    <text evidence="1">Component of the APC/C complex, composed of at least 14 distinct subunits that assemble into a complex of at least 19 chains with a combined molecular mass of around 1.2 MDa. Within this complex, directly interacts with ANAPC2 and ANAPC4. Interacts with CDC20, FZR1/CDH1 and VHL.</text>
</comment>
<comment type="PTM">
    <text evidence="1">Autoubiquitinated by the APC/C complex during G1, leading to its degradation by the proteasome.</text>
</comment>
<comment type="similarity">
    <text evidence="2">Belongs to the ubiquitin-conjugating enzyme family.</text>
</comment>
<accession>Q1RML1</accession>
<accession>A6QLZ2</accession>
<sequence length="223" mass="23896">MNSNVENLPPHIIRLVYKEVTTLTADPPDGIKVFPNEEDLTDLQVTIEGPEGTPYAGGLFRMKLLLGKDFPASPPKGYFLTKIFHPNVGANGEICVNVLKRDWTAELGIRHVLLTIKCLLIHPNPESALNEEAGRLLLENYEEYAARARLLTEIHGGAGGPSGGRPEPGRATASGAAASTADPTAPGGPAGAEGPMAKKHAGERDKKLAAKKKTDKKRALRRL</sequence>
<reference key="1">
    <citation type="submission" date="2006-04" db="EMBL/GenBank/DDBJ databases">
        <authorList>
            <consortium name="NIH - Mammalian Gene Collection (MGC) project"/>
        </authorList>
    </citation>
    <scope>NUCLEOTIDE SEQUENCE [LARGE SCALE MRNA]</scope>
    <source>
        <strain>Crossbred X Angus</strain>
        <strain>Hereford</strain>
        <tissue>Fetal brain</tissue>
        <tissue>Liver</tissue>
    </source>
</reference>
<evidence type="ECO:0000250" key="1">
    <source>
        <dbReference type="UniProtKB" id="Q16763"/>
    </source>
</evidence>
<evidence type="ECO:0000255" key="2">
    <source>
        <dbReference type="PROSITE-ProRule" id="PRU00388"/>
    </source>
</evidence>
<evidence type="ECO:0000255" key="3">
    <source>
        <dbReference type="PROSITE-ProRule" id="PRU10133"/>
    </source>
</evidence>
<evidence type="ECO:0000256" key="4">
    <source>
        <dbReference type="SAM" id="MobiDB-lite"/>
    </source>
</evidence>
<evidence type="ECO:0000305" key="5"/>
<organism>
    <name type="scientific">Bos taurus</name>
    <name type="common">Bovine</name>
    <dbReference type="NCBI Taxonomy" id="9913"/>
    <lineage>
        <taxon>Eukaryota</taxon>
        <taxon>Metazoa</taxon>
        <taxon>Chordata</taxon>
        <taxon>Craniata</taxon>
        <taxon>Vertebrata</taxon>
        <taxon>Euteleostomi</taxon>
        <taxon>Mammalia</taxon>
        <taxon>Eutheria</taxon>
        <taxon>Laurasiatheria</taxon>
        <taxon>Artiodactyla</taxon>
        <taxon>Ruminantia</taxon>
        <taxon>Pecora</taxon>
        <taxon>Bovidae</taxon>
        <taxon>Bovinae</taxon>
        <taxon>Bos</taxon>
    </lineage>
</organism>
<protein>
    <recommendedName>
        <fullName>Ubiquitin-conjugating enzyme E2 S</fullName>
        <ecNumber>2.3.2.23</ecNumber>
    </recommendedName>
    <alternativeName>
        <fullName>E2 ubiquitin-conjugating enzyme S</fullName>
    </alternativeName>
    <alternativeName>
        <fullName>Ubiquitin carrier protein S</fullName>
    </alternativeName>
    <alternativeName>
        <fullName>Ubiquitin-protein ligase S</fullName>
    </alternativeName>
</protein>
<dbReference type="EC" id="2.3.2.23"/>
<dbReference type="EMBL" id="BC114838">
    <property type="protein sequence ID" value="AAI14839.1"/>
    <property type="molecule type" value="mRNA"/>
</dbReference>
<dbReference type="EMBL" id="BC148138">
    <property type="protein sequence ID" value="AAI48139.1"/>
    <property type="molecule type" value="mRNA"/>
</dbReference>
<dbReference type="RefSeq" id="NP_001069940.1">
    <property type="nucleotide sequence ID" value="NM_001076472.2"/>
</dbReference>
<dbReference type="BMRB" id="Q1RML1"/>
<dbReference type="SMR" id="Q1RML1"/>
<dbReference type="FunCoup" id="Q1RML1">
    <property type="interactions" value="4148"/>
</dbReference>
<dbReference type="STRING" id="9913.ENSBTAP00000058650"/>
<dbReference type="PaxDb" id="9913-ENSBTAP00000012136"/>
<dbReference type="Ensembl" id="ENSBTAT00000012136.4">
    <property type="protein sequence ID" value="ENSBTAP00000012136.3"/>
    <property type="gene ID" value="ENSBTAG00000009211.5"/>
</dbReference>
<dbReference type="GeneID" id="617703"/>
<dbReference type="KEGG" id="bta:617703"/>
<dbReference type="CTD" id="27338"/>
<dbReference type="VEuPathDB" id="HostDB:ENSBTAG00000009211"/>
<dbReference type="VGNC" id="VGNC:36595">
    <property type="gene designation" value="UBE2S"/>
</dbReference>
<dbReference type="eggNOG" id="KOG0423">
    <property type="taxonomic scope" value="Eukaryota"/>
</dbReference>
<dbReference type="GeneTree" id="ENSGT00940000157149"/>
<dbReference type="HOGENOM" id="CLU_030988_5_3_1"/>
<dbReference type="InParanoid" id="Q1RML1"/>
<dbReference type="OMA" id="QPAKCGA"/>
<dbReference type="OrthoDB" id="10069349at2759"/>
<dbReference type="TreeFam" id="TF101120"/>
<dbReference type="Reactome" id="R-BTA-141430">
    <property type="pathway name" value="Inactivation of APC/C via direct inhibition of the APC/C complex"/>
</dbReference>
<dbReference type="Reactome" id="R-BTA-174048">
    <property type="pathway name" value="APC/C:Cdc20 mediated degradation of Cyclin B"/>
</dbReference>
<dbReference type="Reactome" id="R-BTA-174084">
    <property type="pathway name" value="Autodegradation of Cdh1 by Cdh1:APC/C"/>
</dbReference>
<dbReference type="Reactome" id="R-BTA-174154">
    <property type="pathway name" value="APC/C:Cdc20 mediated degradation of Securin"/>
</dbReference>
<dbReference type="Reactome" id="R-BTA-174178">
    <property type="pathway name" value="APC/C:Cdh1 mediated degradation of Cdc20 and other APC/C:Cdh1 targeted proteins in late mitosis/early G1"/>
</dbReference>
<dbReference type="Reactome" id="R-BTA-174184">
    <property type="pathway name" value="Cdc20:Phospho-APC/C mediated degradation of Cyclin A"/>
</dbReference>
<dbReference type="Reactome" id="R-BTA-176407">
    <property type="pathway name" value="Conversion from APC/C:Cdc20 to APC/C:Cdh1 in late anaphase"/>
</dbReference>
<dbReference type="Reactome" id="R-BTA-176408">
    <property type="pathway name" value="Regulation of APC/C activators between G1/S and early anaphase"/>
</dbReference>
<dbReference type="Reactome" id="R-BTA-176409">
    <property type="pathway name" value="APC/C:Cdc20 mediated degradation of mitotic proteins"/>
</dbReference>
<dbReference type="Reactome" id="R-BTA-176412">
    <property type="pathway name" value="Phosphorylation of the APC/C"/>
</dbReference>
<dbReference type="Reactome" id="R-BTA-179409">
    <property type="pathway name" value="APC-Cdc20 mediated degradation of Nek2A"/>
</dbReference>
<dbReference type="Reactome" id="R-BTA-2467813">
    <property type="pathway name" value="Separation of Sister Chromatids"/>
</dbReference>
<dbReference type="Reactome" id="R-BTA-2559582">
    <property type="pathway name" value="Senescence-Associated Secretory Phenotype (SASP)"/>
</dbReference>
<dbReference type="Reactome" id="R-BTA-68867">
    <property type="pathway name" value="Assembly of the pre-replicative complex"/>
</dbReference>
<dbReference type="Reactome" id="R-BTA-69017">
    <property type="pathway name" value="CDK-mediated phosphorylation and removal of Cdc6"/>
</dbReference>
<dbReference type="Reactome" id="R-BTA-8866652">
    <property type="pathway name" value="Synthesis of active ubiquitin: roles of E1 and E2 enzymes"/>
</dbReference>
<dbReference type="Reactome" id="R-BTA-983168">
    <property type="pathway name" value="Antigen processing: Ubiquitination &amp; Proteasome degradation"/>
</dbReference>
<dbReference type="UniPathway" id="UPA00143"/>
<dbReference type="Proteomes" id="UP000009136">
    <property type="component" value="Chromosome 18"/>
</dbReference>
<dbReference type="Bgee" id="ENSBTAG00000009211">
    <property type="expression patterns" value="Expressed in granulosa cell and 107 other cell types or tissues"/>
</dbReference>
<dbReference type="GO" id="GO:0005680">
    <property type="term" value="C:anaphase-promoting complex"/>
    <property type="evidence" value="ECO:0000250"/>
    <property type="project" value="UniProtKB"/>
</dbReference>
<dbReference type="GO" id="GO:0005634">
    <property type="term" value="C:nucleus"/>
    <property type="evidence" value="ECO:0000318"/>
    <property type="project" value="GO_Central"/>
</dbReference>
<dbReference type="GO" id="GO:0005524">
    <property type="term" value="F:ATP binding"/>
    <property type="evidence" value="ECO:0007669"/>
    <property type="project" value="UniProtKB-KW"/>
</dbReference>
<dbReference type="GO" id="GO:0061631">
    <property type="term" value="F:ubiquitin conjugating enzyme activity"/>
    <property type="evidence" value="ECO:0000318"/>
    <property type="project" value="GO_Central"/>
</dbReference>
<dbReference type="GO" id="GO:0031145">
    <property type="term" value="P:anaphase-promoting complex-dependent catabolic process"/>
    <property type="evidence" value="ECO:0000250"/>
    <property type="project" value="UniProtKB"/>
</dbReference>
<dbReference type="GO" id="GO:0051301">
    <property type="term" value="P:cell division"/>
    <property type="evidence" value="ECO:0007669"/>
    <property type="project" value="UniProtKB-KW"/>
</dbReference>
<dbReference type="GO" id="GO:0010458">
    <property type="term" value="P:exit from mitosis"/>
    <property type="evidence" value="ECO:0000250"/>
    <property type="project" value="UniProtKB"/>
</dbReference>
<dbReference type="GO" id="GO:0010994">
    <property type="term" value="P:free ubiquitin chain polymerization"/>
    <property type="evidence" value="ECO:0000250"/>
    <property type="project" value="UniProtKB"/>
</dbReference>
<dbReference type="GO" id="GO:1904668">
    <property type="term" value="P:positive regulation of ubiquitin protein ligase activity"/>
    <property type="evidence" value="ECO:0000250"/>
    <property type="project" value="UniProtKB"/>
</dbReference>
<dbReference type="GO" id="GO:0070979">
    <property type="term" value="P:protein K11-linked ubiquitination"/>
    <property type="evidence" value="ECO:0000250"/>
    <property type="project" value="UniProtKB"/>
</dbReference>
<dbReference type="GO" id="GO:0044314">
    <property type="term" value="P:protein K27-linked ubiquitination"/>
    <property type="evidence" value="ECO:0000250"/>
    <property type="project" value="UniProtKB"/>
</dbReference>
<dbReference type="GO" id="GO:0035519">
    <property type="term" value="P:protein K29-linked ubiquitination"/>
    <property type="evidence" value="ECO:0000250"/>
    <property type="project" value="UniProtKB"/>
</dbReference>
<dbReference type="GO" id="GO:0085020">
    <property type="term" value="P:protein K6-linked ubiquitination"/>
    <property type="evidence" value="ECO:0000250"/>
    <property type="project" value="UniProtKB"/>
</dbReference>
<dbReference type="GO" id="GO:0070534">
    <property type="term" value="P:protein K63-linked ubiquitination"/>
    <property type="evidence" value="ECO:0000250"/>
    <property type="project" value="UniProtKB"/>
</dbReference>
<dbReference type="GO" id="GO:0000209">
    <property type="term" value="P:protein polyubiquitination"/>
    <property type="evidence" value="ECO:0000318"/>
    <property type="project" value="GO_Central"/>
</dbReference>
<dbReference type="GO" id="GO:0006511">
    <property type="term" value="P:ubiquitin-dependent protein catabolic process"/>
    <property type="evidence" value="ECO:0000318"/>
    <property type="project" value="GO_Central"/>
</dbReference>
<dbReference type="CDD" id="cd23804">
    <property type="entry name" value="UBCc_UBE2S"/>
    <property type="match status" value="1"/>
</dbReference>
<dbReference type="FunFam" id="3.10.110.10:FF:000034">
    <property type="entry name" value="Ubiquitin-conjugating enzyme E2 S"/>
    <property type="match status" value="1"/>
</dbReference>
<dbReference type="Gene3D" id="3.10.110.10">
    <property type="entry name" value="Ubiquitin Conjugating Enzyme"/>
    <property type="match status" value="1"/>
</dbReference>
<dbReference type="InterPro" id="IPR050113">
    <property type="entry name" value="Ub_conjugating_enzyme"/>
</dbReference>
<dbReference type="InterPro" id="IPR000608">
    <property type="entry name" value="UBQ-conjugat_E2_core"/>
</dbReference>
<dbReference type="InterPro" id="IPR023313">
    <property type="entry name" value="UBQ-conjugating_AS"/>
</dbReference>
<dbReference type="InterPro" id="IPR016135">
    <property type="entry name" value="UBQ-conjugating_enzyme/RWD"/>
</dbReference>
<dbReference type="PANTHER" id="PTHR24067">
    <property type="entry name" value="UBIQUITIN-CONJUGATING ENZYME E2"/>
    <property type="match status" value="1"/>
</dbReference>
<dbReference type="Pfam" id="PF00179">
    <property type="entry name" value="UQ_con"/>
    <property type="match status" value="1"/>
</dbReference>
<dbReference type="SMART" id="SM00212">
    <property type="entry name" value="UBCc"/>
    <property type="match status" value="1"/>
</dbReference>
<dbReference type="SUPFAM" id="SSF54495">
    <property type="entry name" value="UBC-like"/>
    <property type="match status" value="1"/>
</dbReference>
<dbReference type="PROSITE" id="PS00183">
    <property type="entry name" value="UBC_1"/>
    <property type="match status" value="1"/>
</dbReference>
<dbReference type="PROSITE" id="PS50127">
    <property type="entry name" value="UBC_2"/>
    <property type="match status" value="1"/>
</dbReference>
<feature type="chain" id="PRO_0000245039" description="Ubiquitin-conjugating enzyme E2 S">
    <location>
        <begin position="1"/>
        <end position="223"/>
    </location>
</feature>
<feature type="domain" description="UBC core" evidence="2">
    <location>
        <begin position="11"/>
        <end position="157"/>
    </location>
</feature>
<feature type="region of interest" description="Disordered" evidence="4">
    <location>
        <begin position="155"/>
        <end position="223"/>
    </location>
</feature>
<feature type="compositionally biased region" description="Low complexity" evidence="4">
    <location>
        <begin position="169"/>
        <end position="195"/>
    </location>
</feature>
<feature type="compositionally biased region" description="Basic residues" evidence="4">
    <location>
        <begin position="209"/>
        <end position="223"/>
    </location>
</feature>
<feature type="active site" description="Glycyl thioester intermediate" evidence="2 3">
    <location>
        <position position="95"/>
    </location>
</feature>
<feature type="modified residue" description="N-acetylmethionine" evidence="1">
    <location>
        <position position="1"/>
    </location>
</feature>
<feature type="modified residue" description="Phosphoserine" evidence="1">
    <location>
        <position position="174"/>
    </location>
</feature>
<feature type="sequence conflict" description="In Ref. 1; AAI14839." evidence="5" ref="1">
    <original>P</original>
    <variation>T</variation>
    <location>
        <position position="186"/>
    </location>
</feature>
<keyword id="KW-0007">Acetylation</keyword>
<keyword id="KW-0067">ATP-binding</keyword>
<keyword id="KW-0131">Cell cycle</keyword>
<keyword id="KW-0132">Cell division</keyword>
<keyword id="KW-0547">Nucleotide-binding</keyword>
<keyword id="KW-0597">Phosphoprotein</keyword>
<keyword id="KW-1185">Reference proteome</keyword>
<keyword id="KW-0808">Transferase</keyword>
<keyword id="KW-0832">Ubl conjugation</keyword>
<keyword id="KW-0833">Ubl conjugation pathway</keyword>
<gene>
    <name type="primary">UBE2S</name>
</gene>